<comment type="subcellular location">
    <subcellularLocation>
        <location evidence="4">Cytoplasm</location>
    </subcellularLocation>
</comment>
<evidence type="ECO:0000255" key="1">
    <source>
        <dbReference type="PROSITE-ProRule" id="PRU00092"/>
    </source>
</evidence>
<evidence type="ECO:0000255" key="2">
    <source>
        <dbReference type="PROSITE-ProRule" id="PRU00382"/>
    </source>
</evidence>
<evidence type="ECO:0000256" key="3">
    <source>
        <dbReference type="SAM" id="MobiDB-lite"/>
    </source>
</evidence>
<evidence type="ECO:0000269" key="4">
    <source>
    </source>
</evidence>
<proteinExistence type="predicted"/>
<sequence length="695" mass="79052">MSNFDDLQILDQLQTSARFRGDTRIRRFKGSNNSKSPFGLNPSSRISQWPRITFIRAKDNYNPAEELCQLIDEQNAHNEAKHQSKEIMLPKETNVKSCEDLSKTGEIKALDIVLFKAITSKGDTLKVKKIPEYAEAFDTTKNVEVSSFPEKSMNENVLIQHSLNLAPSDKEISSTEESEQLCYKEQESEKELYSKDNDDSLDILNVPNLVNDDIANNNAAPPPPLAQAQEQLSTENEDEFDIDDTTDKMTTFTMNKFADLSVLEEDDDDEDEDEELEGEKEEEEEEKEKPEISNYDETEGKVNFSLEDSESLEFDEGSDDYDYAKLTTELVGNTDSLAEDEDDILEEDEDEDEEELLAIFDASDDSEIEAYLSIGDTLQNDFTIYDYDSEDEEYNNPSTQKTEKVSQSKKGAKVKEEKGLKKDRKLPKKMRKAQKKLERKAGKAVAARMGDAFSNSLDDESMNLYAELQEQWLKDKSKKARRRAEREKLRSEGLLGKKSKKKLLRESQKPSSSDSDNASLTRIDKIFINDVYQRMQQFKHSAIEEISLPPCRKYVRRLVHALANDLNLKSRSYGSGNKRYTMLSKTHKFDASSVDLVSLTRIMERLQTRVEYQSFSKSGRKSRMTVSSVRSSKATRVYDGQIVGEDAPEISKENPGRRLLEKLGWYAGKGLGHPENEGSKDSLRAIVKVSRSGLG</sequence>
<protein>
    <recommendedName>
        <fullName>G-patch and R3H domain-containing protein C30B4.02c</fullName>
    </recommendedName>
</protein>
<reference key="1">
    <citation type="journal article" date="2002" name="Nature">
        <title>The genome sequence of Schizosaccharomyces pombe.</title>
        <authorList>
            <person name="Wood V."/>
            <person name="Gwilliam R."/>
            <person name="Rajandream M.A."/>
            <person name="Lyne M.H."/>
            <person name="Lyne R."/>
            <person name="Stewart A."/>
            <person name="Sgouros J.G."/>
            <person name="Peat N."/>
            <person name="Hayles J."/>
            <person name="Baker S.G."/>
            <person name="Basham D."/>
            <person name="Bowman S."/>
            <person name="Brooks K."/>
            <person name="Brown D."/>
            <person name="Brown S."/>
            <person name="Chillingworth T."/>
            <person name="Churcher C.M."/>
            <person name="Collins M."/>
            <person name="Connor R."/>
            <person name="Cronin A."/>
            <person name="Davis P."/>
            <person name="Feltwell T."/>
            <person name="Fraser A."/>
            <person name="Gentles S."/>
            <person name="Goble A."/>
            <person name="Hamlin N."/>
            <person name="Harris D.E."/>
            <person name="Hidalgo J."/>
            <person name="Hodgson G."/>
            <person name="Holroyd S."/>
            <person name="Hornsby T."/>
            <person name="Howarth S."/>
            <person name="Huckle E.J."/>
            <person name="Hunt S."/>
            <person name="Jagels K."/>
            <person name="James K.D."/>
            <person name="Jones L."/>
            <person name="Jones M."/>
            <person name="Leather S."/>
            <person name="McDonald S."/>
            <person name="McLean J."/>
            <person name="Mooney P."/>
            <person name="Moule S."/>
            <person name="Mungall K.L."/>
            <person name="Murphy L.D."/>
            <person name="Niblett D."/>
            <person name="Odell C."/>
            <person name="Oliver K."/>
            <person name="O'Neil S."/>
            <person name="Pearson D."/>
            <person name="Quail M.A."/>
            <person name="Rabbinowitsch E."/>
            <person name="Rutherford K.M."/>
            <person name="Rutter S."/>
            <person name="Saunders D."/>
            <person name="Seeger K."/>
            <person name="Sharp S."/>
            <person name="Skelton J."/>
            <person name="Simmonds M.N."/>
            <person name="Squares R."/>
            <person name="Squares S."/>
            <person name="Stevens K."/>
            <person name="Taylor K."/>
            <person name="Taylor R.G."/>
            <person name="Tivey A."/>
            <person name="Walsh S.V."/>
            <person name="Warren T."/>
            <person name="Whitehead S."/>
            <person name="Woodward J.R."/>
            <person name="Volckaert G."/>
            <person name="Aert R."/>
            <person name="Robben J."/>
            <person name="Grymonprez B."/>
            <person name="Weltjens I."/>
            <person name="Vanstreels E."/>
            <person name="Rieger M."/>
            <person name="Schaefer M."/>
            <person name="Mueller-Auer S."/>
            <person name="Gabel C."/>
            <person name="Fuchs M."/>
            <person name="Duesterhoeft A."/>
            <person name="Fritzc C."/>
            <person name="Holzer E."/>
            <person name="Moestl D."/>
            <person name="Hilbert H."/>
            <person name="Borzym K."/>
            <person name="Langer I."/>
            <person name="Beck A."/>
            <person name="Lehrach H."/>
            <person name="Reinhardt R."/>
            <person name="Pohl T.M."/>
            <person name="Eger P."/>
            <person name="Zimmermann W."/>
            <person name="Wedler H."/>
            <person name="Wambutt R."/>
            <person name="Purnelle B."/>
            <person name="Goffeau A."/>
            <person name="Cadieu E."/>
            <person name="Dreano S."/>
            <person name="Gloux S."/>
            <person name="Lelaure V."/>
            <person name="Mottier S."/>
            <person name="Galibert F."/>
            <person name="Aves S.J."/>
            <person name="Xiang Z."/>
            <person name="Hunt C."/>
            <person name="Moore K."/>
            <person name="Hurst S.M."/>
            <person name="Lucas M."/>
            <person name="Rochet M."/>
            <person name="Gaillardin C."/>
            <person name="Tallada V.A."/>
            <person name="Garzon A."/>
            <person name="Thode G."/>
            <person name="Daga R.R."/>
            <person name="Cruzado L."/>
            <person name="Jimenez J."/>
            <person name="Sanchez M."/>
            <person name="del Rey F."/>
            <person name="Benito J."/>
            <person name="Dominguez A."/>
            <person name="Revuelta J.L."/>
            <person name="Moreno S."/>
            <person name="Armstrong J."/>
            <person name="Forsburg S.L."/>
            <person name="Cerutti L."/>
            <person name="Lowe T."/>
            <person name="McCombie W.R."/>
            <person name="Paulsen I."/>
            <person name="Potashkin J."/>
            <person name="Shpakovski G.V."/>
            <person name="Ussery D."/>
            <person name="Barrell B.G."/>
            <person name="Nurse P."/>
        </authorList>
    </citation>
    <scope>NUCLEOTIDE SEQUENCE [LARGE SCALE GENOMIC DNA]</scope>
    <source>
        <strain>972 / ATCC 24843</strain>
    </source>
</reference>
<reference key="2">
    <citation type="journal article" date="2006" name="Nat. Biotechnol.">
        <title>ORFeome cloning and global analysis of protein localization in the fission yeast Schizosaccharomyces pombe.</title>
        <authorList>
            <person name="Matsuyama A."/>
            <person name="Arai R."/>
            <person name="Yashiroda Y."/>
            <person name="Shirai A."/>
            <person name="Kamata A."/>
            <person name="Sekido S."/>
            <person name="Kobayashi Y."/>
            <person name="Hashimoto A."/>
            <person name="Hamamoto M."/>
            <person name="Hiraoka Y."/>
            <person name="Horinouchi S."/>
            <person name="Yoshida M."/>
        </authorList>
    </citation>
    <scope>SUBCELLULAR LOCATION [LARGE SCALE ANALYSIS]</scope>
</reference>
<keyword id="KW-0963">Cytoplasm</keyword>
<keyword id="KW-1185">Reference proteome</keyword>
<accession>O74363</accession>
<gene>
    <name type="ORF">SPBC30B4.02c</name>
</gene>
<name>YND2_SCHPO</name>
<feature type="chain" id="PRO_0000303957" description="G-patch and R3H domain-containing protein C30B4.02c">
    <location>
        <begin position="1"/>
        <end position="695"/>
    </location>
</feature>
<feature type="domain" description="R3H" evidence="2">
    <location>
        <begin position="525"/>
        <end position="587"/>
    </location>
</feature>
<feature type="domain" description="G-patch" evidence="1">
    <location>
        <begin position="652"/>
        <end position="695"/>
    </location>
</feature>
<feature type="region of interest" description="Disordered" evidence="3">
    <location>
        <begin position="168"/>
        <end position="200"/>
    </location>
</feature>
<feature type="region of interest" description="Disordered" evidence="3">
    <location>
        <begin position="213"/>
        <end position="242"/>
    </location>
</feature>
<feature type="region of interest" description="Disordered" evidence="3">
    <location>
        <begin position="257"/>
        <end position="317"/>
    </location>
</feature>
<feature type="region of interest" description="Disordered" evidence="3">
    <location>
        <begin position="332"/>
        <end position="351"/>
    </location>
</feature>
<feature type="region of interest" description="Disordered" evidence="3">
    <location>
        <begin position="388"/>
        <end position="448"/>
    </location>
</feature>
<feature type="region of interest" description="Disordered" evidence="3">
    <location>
        <begin position="475"/>
        <end position="517"/>
    </location>
</feature>
<feature type="compositionally biased region" description="Basic and acidic residues" evidence="3">
    <location>
        <begin position="182"/>
        <end position="198"/>
    </location>
</feature>
<feature type="compositionally biased region" description="Acidic residues" evidence="3">
    <location>
        <begin position="262"/>
        <end position="286"/>
    </location>
</feature>
<feature type="compositionally biased region" description="Acidic residues" evidence="3">
    <location>
        <begin position="307"/>
        <end position="317"/>
    </location>
</feature>
<feature type="compositionally biased region" description="Acidic residues" evidence="3">
    <location>
        <begin position="337"/>
        <end position="351"/>
    </location>
</feature>
<feature type="compositionally biased region" description="Basic residues" evidence="3">
    <location>
        <begin position="421"/>
        <end position="434"/>
    </location>
</feature>
<organism>
    <name type="scientific">Schizosaccharomyces pombe (strain 972 / ATCC 24843)</name>
    <name type="common">Fission yeast</name>
    <dbReference type="NCBI Taxonomy" id="284812"/>
    <lineage>
        <taxon>Eukaryota</taxon>
        <taxon>Fungi</taxon>
        <taxon>Dikarya</taxon>
        <taxon>Ascomycota</taxon>
        <taxon>Taphrinomycotina</taxon>
        <taxon>Schizosaccharomycetes</taxon>
        <taxon>Schizosaccharomycetales</taxon>
        <taxon>Schizosaccharomycetaceae</taxon>
        <taxon>Schizosaccharomyces</taxon>
    </lineage>
</organism>
<dbReference type="EMBL" id="CU329671">
    <property type="protein sequence ID" value="CAA20315.1"/>
    <property type="molecule type" value="Genomic_DNA"/>
</dbReference>
<dbReference type="PIR" id="T40168">
    <property type="entry name" value="T40168"/>
</dbReference>
<dbReference type="BioGRID" id="276944">
    <property type="interactions" value="30"/>
</dbReference>
<dbReference type="FunCoup" id="O74363">
    <property type="interactions" value="271"/>
</dbReference>
<dbReference type="STRING" id="284812.O74363"/>
<dbReference type="iPTMnet" id="O74363"/>
<dbReference type="PaxDb" id="4896-SPBC30B4.02c.1"/>
<dbReference type="EnsemblFungi" id="SPBC30B4.02c.1">
    <property type="protein sequence ID" value="SPBC30B4.02c.1:pep"/>
    <property type="gene ID" value="SPBC30B4.02c"/>
</dbReference>
<dbReference type="KEGG" id="spo:2540416"/>
<dbReference type="PomBase" id="SPBC30B4.02c"/>
<dbReference type="VEuPathDB" id="FungiDB:SPBC30B4.02c"/>
<dbReference type="eggNOG" id="KOG0154">
    <property type="taxonomic scope" value="Eukaryota"/>
</dbReference>
<dbReference type="HOGENOM" id="CLU_428378_0_0_1"/>
<dbReference type="InParanoid" id="O74363"/>
<dbReference type="OMA" id="QWPRITF"/>
<dbReference type="PRO" id="PR:O74363"/>
<dbReference type="Proteomes" id="UP000002485">
    <property type="component" value="Chromosome II"/>
</dbReference>
<dbReference type="GO" id="GO:0005737">
    <property type="term" value="C:cytoplasm"/>
    <property type="evidence" value="ECO:0007005"/>
    <property type="project" value="PomBase"/>
</dbReference>
<dbReference type="GO" id="GO:0005829">
    <property type="term" value="C:cytosol"/>
    <property type="evidence" value="ECO:0007005"/>
    <property type="project" value="PomBase"/>
</dbReference>
<dbReference type="GO" id="GO:0005634">
    <property type="term" value="C:nucleus"/>
    <property type="evidence" value="ECO:0000318"/>
    <property type="project" value="GO_Central"/>
</dbReference>
<dbReference type="GO" id="GO:0003676">
    <property type="term" value="F:nucleic acid binding"/>
    <property type="evidence" value="ECO:0007669"/>
    <property type="project" value="InterPro"/>
</dbReference>
<dbReference type="GO" id="GO:0006364">
    <property type="term" value="P:rRNA processing"/>
    <property type="evidence" value="ECO:0000266"/>
    <property type="project" value="PomBase"/>
</dbReference>
<dbReference type="Gene3D" id="3.30.1370.50">
    <property type="entry name" value="R3H-like domain"/>
    <property type="match status" value="1"/>
</dbReference>
<dbReference type="InterPro" id="IPR000467">
    <property type="entry name" value="G_patch_dom"/>
</dbReference>
<dbReference type="InterPro" id="IPR001374">
    <property type="entry name" value="R3H_dom"/>
</dbReference>
<dbReference type="InterPro" id="IPR036867">
    <property type="entry name" value="R3H_dom_sf"/>
</dbReference>
<dbReference type="InterPro" id="IPR051189">
    <property type="entry name" value="Splicing_assoc_domain"/>
</dbReference>
<dbReference type="PANTHER" id="PTHR14195">
    <property type="entry name" value="G PATCH DOMAIN CONTAINING PROTEIN 2"/>
    <property type="match status" value="1"/>
</dbReference>
<dbReference type="Pfam" id="PF01585">
    <property type="entry name" value="G-patch"/>
    <property type="match status" value="1"/>
</dbReference>
<dbReference type="Pfam" id="PF01424">
    <property type="entry name" value="R3H"/>
    <property type="match status" value="1"/>
</dbReference>
<dbReference type="SMART" id="SM00443">
    <property type="entry name" value="G_patch"/>
    <property type="match status" value="1"/>
</dbReference>
<dbReference type="SMART" id="SM00393">
    <property type="entry name" value="R3H"/>
    <property type="match status" value="1"/>
</dbReference>
<dbReference type="SUPFAM" id="SSF82708">
    <property type="entry name" value="R3H domain"/>
    <property type="match status" value="1"/>
</dbReference>
<dbReference type="PROSITE" id="PS50174">
    <property type="entry name" value="G_PATCH"/>
    <property type="match status" value="1"/>
</dbReference>
<dbReference type="PROSITE" id="PS51061">
    <property type="entry name" value="R3H"/>
    <property type="match status" value="1"/>
</dbReference>